<name>AROA_DICNV</name>
<reference key="1">
    <citation type="journal article" date="2007" name="Nat. Biotechnol.">
        <title>Genome sequence and identification of candidate vaccine antigens from the animal pathogen Dichelobacter nodosus.</title>
        <authorList>
            <person name="Myers G.S.A."/>
            <person name="Parker D."/>
            <person name="Al-Hasani K."/>
            <person name="Kennan R.M."/>
            <person name="Seemann T."/>
            <person name="Ren Q."/>
            <person name="Badger J.H."/>
            <person name="Selengut J.D."/>
            <person name="Deboy R.T."/>
            <person name="Tettelin H."/>
            <person name="Boyce J.D."/>
            <person name="McCarl V.P."/>
            <person name="Han X."/>
            <person name="Nelson W.C."/>
            <person name="Madupu R."/>
            <person name="Mohamoud Y."/>
            <person name="Holley T."/>
            <person name="Fedorova N."/>
            <person name="Khouri H."/>
            <person name="Bottomley S.P."/>
            <person name="Whittington R.J."/>
            <person name="Adler B."/>
            <person name="Songer J.G."/>
            <person name="Rood J.I."/>
            <person name="Paulsen I.T."/>
        </authorList>
    </citation>
    <scope>NUCLEOTIDE SEQUENCE [LARGE SCALE GENOMIC DNA]</scope>
    <source>
        <strain>VCS1703A</strain>
    </source>
</reference>
<organism>
    <name type="scientific">Dichelobacter nodosus (strain VCS1703A)</name>
    <dbReference type="NCBI Taxonomy" id="246195"/>
    <lineage>
        <taxon>Bacteria</taxon>
        <taxon>Pseudomonadati</taxon>
        <taxon>Pseudomonadota</taxon>
        <taxon>Gammaproteobacteria</taxon>
        <taxon>Cardiobacteriales</taxon>
        <taxon>Cardiobacteriaceae</taxon>
        <taxon>Dichelobacter</taxon>
    </lineage>
</organism>
<dbReference type="EC" id="2.5.1.19" evidence="1"/>
<dbReference type="EMBL" id="CP000513">
    <property type="protein sequence ID" value="ABQ13246.1"/>
    <property type="molecule type" value="Genomic_DNA"/>
</dbReference>
<dbReference type="SMR" id="A5EWS0"/>
<dbReference type="STRING" id="246195.DNO_0111"/>
<dbReference type="KEGG" id="dno:DNO_0111"/>
<dbReference type="eggNOG" id="COG0128">
    <property type="taxonomic scope" value="Bacteria"/>
</dbReference>
<dbReference type="HOGENOM" id="CLU_024321_0_1_6"/>
<dbReference type="OrthoDB" id="9809920at2"/>
<dbReference type="UniPathway" id="UPA00053">
    <property type="reaction ID" value="UER00089"/>
</dbReference>
<dbReference type="Proteomes" id="UP000000248">
    <property type="component" value="Chromosome"/>
</dbReference>
<dbReference type="GO" id="GO:0005737">
    <property type="term" value="C:cytoplasm"/>
    <property type="evidence" value="ECO:0007669"/>
    <property type="project" value="UniProtKB-SubCell"/>
</dbReference>
<dbReference type="GO" id="GO:0003866">
    <property type="term" value="F:3-phosphoshikimate 1-carboxyvinyltransferase activity"/>
    <property type="evidence" value="ECO:0007669"/>
    <property type="project" value="UniProtKB-UniRule"/>
</dbReference>
<dbReference type="GO" id="GO:0008652">
    <property type="term" value="P:amino acid biosynthetic process"/>
    <property type="evidence" value="ECO:0007669"/>
    <property type="project" value="UniProtKB-KW"/>
</dbReference>
<dbReference type="GO" id="GO:0009073">
    <property type="term" value="P:aromatic amino acid family biosynthetic process"/>
    <property type="evidence" value="ECO:0007669"/>
    <property type="project" value="UniProtKB-KW"/>
</dbReference>
<dbReference type="GO" id="GO:0009423">
    <property type="term" value="P:chorismate biosynthetic process"/>
    <property type="evidence" value="ECO:0007669"/>
    <property type="project" value="UniProtKB-UniRule"/>
</dbReference>
<dbReference type="CDD" id="cd01556">
    <property type="entry name" value="EPSP_synthase"/>
    <property type="match status" value="1"/>
</dbReference>
<dbReference type="FunFam" id="3.65.10.10:FF:000005">
    <property type="entry name" value="3-phosphoshikimate 1-carboxyvinyltransferase"/>
    <property type="match status" value="1"/>
</dbReference>
<dbReference type="Gene3D" id="3.65.10.10">
    <property type="entry name" value="Enolpyruvate transferase domain"/>
    <property type="match status" value="2"/>
</dbReference>
<dbReference type="HAMAP" id="MF_00210">
    <property type="entry name" value="EPSP_synth"/>
    <property type="match status" value="1"/>
</dbReference>
<dbReference type="InterPro" id="IPR001986">
    <property type="entry name" value="Enolpyruvate_Tfrase_dom"/>
</dbReference>
<dbReference type="InterPro" id="IPR036968">
    <property type="entry name" value="Enolpyruvate_Tfrase_sf"/>
</dbReference>
<dbReference type="InterPro" id="IPR006264">
    <property type="entry name" value="EPSP_synthase"/>
</dbReference>
<dbReference type="InterPro" id="IPR023193">
    <property type="entry name" value="EPSP_synthase_CS"/>
</dbReference>
<dbReference type="InterPro" id="IPR013792">
    <property type="entry name" value="RNA3'P_cycl/enolpyr_Trfase_a/b"/>
</dbReference>
<dbReference type="NCBIfam" id="TIGR01356">
    <property type="entry name" value="aroA"/>
    <property type="match status" value="1"/>
</dbReference>
<dbReference type="PANTHER" id="PTHR21090">
    <property type="entry name" value="AROM/DEHYDROQUINATE SYNTHASE"/>
    <property type="match status" value="1"/>
</dbReference>
<dbReference type="PANTHER" id="PTHR21090:SF5">
    <property type="entry name" value="PENTAFUNCTIONAL AROM POLYPEPTIDE"/>
    <property type="match status" value="1"/>
</dbReference>
<dbReference type="Pfam" id="PF00275">
    <property type="entry name" value="EPSP_synthase"/>
    <property type="match status" value="1"/>
</dbReference>
<dbReference type="PIRSF" id="PIRSF000505">
    <property type="entry name" value="EPSPS"/>
    <property type="match status" value="1"/>
</dbReference>
<dbReference type="SUPFAM" id="SSF55205">
    <property type="entry name" value="EPT/RTPC-like"/>
    <property type="match status" value="1"/>
</dbReference>
<dbReference type="PROSITE" id="PS00104">
    <property type="entry name" value="EPSP_SYNTHASE_1"/>
    <property type="match status" value="1"/>
</dbReference>
<dbReference type="PROSITE" id="PS00885">
    <property type="entry name" value="EPSP_SYNTHASE_2"/>
    <property type="match status" value="1"/>
</dbReference>
<accession>A5EWS0</accession>
<comment type="function">
    <text evidence="1">Catalyzes the transfer of the enolpyruvyl moiety of phosphoenolpyruvate (PEP) to the 5-hydroxyl of shikimate-3-phosphate (S3P) to produce enolpyruvyl shikimate-3-phosphate and inorganic phosphate.</text>
</comment>
<comment type="catalytic activity">
    <reaction evidence="1">
        <text>3-phosphoshikimate + phosphoenolpyruvate = 5-O-(1-carboxyvinyl)-3-phosphoshikimate + phosphate</text>
        <dbReference type="Rhea" id="RHEA:21256"/>
        <dbReference type="ChEBI" id="CHEBI:43474"/>
        <dbReference type="ChEBI" id="CHEBI:57701"/>
        <dbReference type="ChEBI" id="CHEBI:58702"/>
        <dbReference type="ChEBI" id="CHEBI:145989"/>
        <dbReference type="EC" id="2.5.1.19"/>
    </reaction>
    <physiologicalReaction direction="left-to-right" evidence="1">
        <dbReference type="Rhea" id="RHEA:21257"/>
    </physiologicalReaction>
</comment>
<comment type="pathway">
    <text evidence="1">Metabolic intermediate biosynthesis; chorismate biosynthesis; chorismate from D-erythrose 4-phosphate and phosphoenolpyruvate: step 6/7.</text>
</comment>
<comment type="subunit">
    <text evidence="1">Monomer.</text>
</comment>
<comment type="subcellular location">
    <subcellularLocation>
        <location evidence="1">Cytoplasm</location>
    </subcellularLocation>
</comment>
<comment type="similarity">
    <text evidence="1">Belongs to the EPSP synthase family.</text>
</comment>
<sequence length="442" mass="47401">MTNIWHTAPVSALSGEITICGDKSMSHRALLLAALAEGQTEIRGFLPCADCLATAQALRALWVDIQREKEIVTIRGVGFLGLQPPKAPLNMQNSGTSMRLLAGILAAQRFESVLCGDESLEKRPMQRIITPLVQMGAKIVSHSNFTAPLHISGRPLTGIDYALPLPSAQLKSCLILAGLLADGTTRLHTCGISRDHTERMLPLFGGALETQKEQIIVTGGQKLHGCVLEIVGDLSAAAFFMVAALIAPRAEVVIRNVGINPTRSAIITLLQKMGGRIELHHQRFWGAEPVADIVVYHSKLRGITVAPEWIANAIDELPIFFIAAACAEGTTFVGNLSELRVKESDRLAAMAQNLQTLGVACDVGADFIHIYGRSDRQFLPARVNSFGDHRIAMSLAVAGVRAAGELLIDDGAVAAVSMPQFRDFAAAIGMNVGEKDAKNCHD</sequence>
<protein>
    <recommendedName>
        <fullName evidence="1">3-phosphoshikimate 1-carboxyvinyltransferase</fullName>
        <ecNumber evidence="1">2.5.1.19</ecNumber>
    </recommendedName>
    <alternativeName>
        <fullName evidence="1">5-enolpyruvylshikimate-3-phosphate synthase</fullName>
        <shortName evidence="1">EPSP synthase</shortName>
        <shortName evidence="1">EPSPS</shortName>
    </alternativeName>
</protein>
<proteinExistence type="inferred from homology"/>
<evidence type="ECO:0000255" key="1">
    <source>
        <dbReference type="HAMAP-Rule" id="MF_00210"/>
    </source>
</evidence>
<keyword id="KW-0028">Amino-acid biosynthesis</keyword>
<keyword id="KW-0057">Aromatic amino acid biosynthesis</keyword>
<keyword id="KW-0963">Cytoplasm</keyword>
<keyword id="KW-1185">Reference proteome</keyword>
<keyword id="KW-0808">Transferase</keyword>
<feature type="chain" id="PRO_1000058596" description="3-phosphoshikimate 1-carboxyvinyltransferase">
    <location>
        <begin position="1"/>
        <end position="442"/>
    </location>
</feature>
<feature type="active site" description="Proton acceptor" evidence="1">
    <location>
        <position position="315"/>
    </location>
</feature>
<feature type="binding site" evidence="1">
    <location>
        <position position="23"/>
    </location>
    <ligand>
        <name>3-phosphoshikimate</name>
        <dbReference type="ChEBI" id="CHEBI:145989"/>
    </ligand>
</feature>
<feature type="binding site" evidence="1">
    <location>
        <position position="23"/>
    </location>
    <ligand>
        <name>phosphoenolpyruvate</name>
        <dbReference type="ChEBI" id="CHEBI:58702"/>
    </ligand>
</feature>
<feature type="binding site" evidence="1">
    <location>
        <position position="24"/>
    </location>
    <ligand>
        <name>3-phosphoshikimate</name>
        <dbReference type="ChEBI" id="CHEBI:145989"/>
    </ligand>
</feature>
<feature type="binding site" evidence="1">
    <location>
        <position position="28"/>
    </location>
    <ligand>
        <name>3-phosphoshikimate</name>
        <dbReference type="ChEBI" id="CHEBI:145989"/>
    </ligand>
</feature>
<feature type="binding site" evidence="1">
    <location>
        <position position="95"/>
    </location>
    <ligand>
        <name>phosphoenolpyruvate</name>
        <dbReference type="ChEBI" id="CHEBI:58702"/>
    </ligand>
</feature>
<feature type="binding site" evidence="1">
    <location>
        <position position="123"/>
    </location>
    <ligand>
        <name>phosphoenolpyruvate</name>
        <dbReference type="ChEBI" id="CHEBI:58702"/>
    </ligand>
</feature>
<feature type="binding site" evidence="1">
    <location>
        <position position="167"/>
    </location>
    <ligand>
        <name>3-phosphoshikimate</name>
        <dbReference type="ChEBI" id="CHEBI:145989"/>
    </ligand>
</feature>
<feature type="binding site" evidence="1">
    <location>
        <position position="169"/>
    </location>
    <ligand>
        <name>3-phosphoshikimate</name>
        <dbReference type="ChEBI" id="CHEBI:145989"/>
    </ligand>
</feature>
<feature type="binding site" evidence="1">
    <location>
        <position position="169"/>
    </location>
    <ligand>
        <name>phosphoenolpyruvate</name>
        <dbReference type="ChEBI" id="CHEBI:58702"/>
    </ligand>
</feature>
<feature type="binding site" evidence="1">
    <location>
        <position position="315"/>
    </location>
    <ligand>
        <name>3-phosphoshikimate</name>
        <dbReference type="ChEBI" id="CHEBI:145989"/>
    </ligand>
</feature>
<feature type="binding site" evidence="1">
    <location>
        <position position="342"/>
    </location>
    <ligand>
        <name>3-phosphoshikimate</name>
        <dbReference type="ChEBI" id="CHEBI:145989"/>
    </ligand>
</feature>
<feature type="binding site" evidence="1">
    <location>
        <position position="346"/>
    </location>
    <ligand>
        <name>phosphoenolpyruvate</name>
        <dbReference type="ChEBI" id="CHEBI:58702"/>
    </ligand>
</feature>
<feature type="binding site" evidence="1">
    <location>
        <position position="390"/>
    </location>
    <ligand>
        <name>phosphoenolpyruvate</name>
        <dbReference type="ChEBI" id="CHEBI:58702"/>
    </ligand>
</feature>
<gene>
    <name evidence="1" type="primary">aroA</name>
    <name type="ordered locus">DNO_0111</name>
</gene>